<gene>
    <name evidence="1" type="primary">smpB</name>
    <name type="ordered locus">Cagg_0655</name>
</gene>
<accession>B8G4V8</accession>
<reference key="1">
    <citation type="submission" date="2008-12" db="EMBL/GenBank/DDBJ databases">
        <title>Complete sequence of Chloroflexus aggregans DSM 9485.</title>
        <authorList>
            <consortium name="US DOE Joint Genome Institute"/>
            <person name="Lucas S."/>
            <person name="Copeland A."/>
            <person name="Lapidus A."/>
            <person name="Glavina del Rio T."/>
            <person name="Dalin E."/>
            <person name="Tice H."/>
            <person name="Pitluck S."/>
            <person name="Foster B."/>
            <person name="Larimer F."/>
            <person name="Land M."/>
            <person name="Hauser L."/>
            <person name="Kyrpides N."/>
            <person name="Mikhailova N."/>
            <person name="Bryant D.A."/>
            <person name="Richardson P."/>
        </authorList>
    </citation>
    <scope>NUCLEOTIDE SEQUENCE [LARGE SCALE GENOMIC DNA]</scope>
    <source>
        <strain>MD-66 / DSM 9485</strain>
    </source>
</reference>
<organism>
    <name type="scientific">Chloroflexus aggregans (strain MD-66 / DSM 9485)</name>
    <dbReference type="NCBI Taxonomy" id="326427"/>
    <lineage>
        <taxon>Bacteria</taxon>
        <taxon>Bacillati</taxon>
        <taxon>Chloroflexota</taxon>
        <taxon>Chloroflexia</taxon>
        <taxon>Chloroflexales</taxon>
        <taxon>Chloroflexineae</taxon>
        <taxon>Chloroflexaceae</taxon>
        <taxon>Chloroflexus</taxon>
    </lineage>
</organism>
<dbReference type="EMBL" id="CP001337">
    <property type="protein sequence ID" value="ACL23591.1"/>
    <property type="molecule type" value="Genomic_DNA"/>
</dbReference>
<dbReference type="RefSeq" id="WP_012615957.1">
    <property type="nucleotide sequence ID" value="NC_011831.1"/>
</dbReference>
<dbReference type="SMR" id="B8G4V8"/>
<dbReference type="STRING" id="326427.Cagg_0655"/>
<dbReference type="KEGG" id="cag:Cagg_0655"/>
<dbReference type="eggNOG" id="COG0691">
    <property type="taxonomic scope" value="Bacteria"/>
</dbReference>
<dbReference type="HOGENOM" id="CLU_108953_0_1_0"/>
<dbReference type="OrthoDB" id="9805462at2"/>
<dbReference type="Proteomes" id="UP000002508">
    <property type="component" value="Chromosome"/>
</dbReference>
<dbReference type="GO" id="GO:0005829">
    <property type="term" value="C:cytosol"/>
    <property type="evidence" value="ECO:0007669"/>
    <property type="project" value="TreeGrafter"/>
</dbReference>
<dbReference type="GO" id="GO:0003723">
    <property type="term" value="F:RNA binding"/>
    <property type="evidence" value="ECO:0007669"/>
    <property type="project" value="UniProtKB-UniRule"/>
</dbReference>
<dbReference type="GO" id="GO:0070929">
    <property type="term" value="P:trans-translation"/>
    <property type="evidence" value="ECO:0007669"/>
    <property type="project" value="UniProtKB-UniRule"/>
</dbReference>
<dbReference type="CDD" id="cd09294">
    <property type="entry name" value="SmpB"/>
    <property type="match status" value="1"/>
</dbReference>
<dbReference type="Gene3D" id="2.40.280.10">
    <property type="match status" value="1"/>
</dbReference>
<dbReference type="HAMAP" id="MF_00023">
    <property type="entry name" value="SmpB"/>
    <property type="match status" value="1"/>
</dbReference>
<dbReference type="InterPro" id="IPR023620">
    <property type="entry name" value="SmpB"/>
</dbReference>
<dbReference type="InterPro" id="IPR000037">
    <property type="entry name" value="SsrA-bd_prot"/>
</dbReference>
<dbReference type="InterPro" id="IPR020081">
    <property type="entry name" value="SsrA-bd_prot_CS"/>
</dbReference>
<dbReference type="NCBIfam" id="NF003843">
    <property type="entry name" value="PRK05422.1"/>
    <property type="match status" value="1"/>
</dbReference>
<dbReference type="NCBIfam" id="TIGR00086">
    <property type="entry name" value="smpB"/>
    <property type="match status" value="1"/>
</dbReference>
<dbReference type="PANTHER" id="PTHR30308:SF2">
    <property type="entry name" value="SSRA-BINDING PROTEIN"/>
    <property type="match status" value="1"/>
</dbReference>
<dbReference type="PANTHER" id="PTHR30308">
    <property type="entry name" value="TMRNA-BINDING COMPONENT OF TRANS-TRANSLATION TAGGING COMPLEX"/>
    <property type="match status" value="1"/>
</dbReference>
<dbReference type="Pfam" id="PF01668">
    <property type="entry name" value="SmpB"/>
    <property type="match status" value="1"/>
</dbReference>
<dbReference type="SUPFAM" id="SSF74982">
    <property type="entry name" value="Small protein B (SmpB)"/>
    <property type="match status" value="1"/>
</dbReference>
<dbReference type="PROSITE" id="PS01317">
    <property type="entry name" value="SSRP"/>
    <property type="match status" value="1"/>
</dbReference>
<keyword id="KW-0963">Cytoplasm</keyword>
<keyword id="KW-0694">RNA-binding</keyword>
<sequence>MATKTNHIAVVAENRKARHDYDIEETIEAGIVLSGSEIKSVRAGRVNLRGSFARVIDDEVFLYDAHIAPYEQSGKYFNHDPLRPRKLLLHRREINRLNGLVRMKGMTLVPLKIYLKGRRAKVELGIARGKKIYDKREDIARRDAERDIERALKRRIRE</sequence>
<proteinExistence type="inferred from homology"/>
<evidence type="ECO:0000255" key="1">
    <source>
        <dbReference type="HAMAP-Rule" id="MF_00023"/>
    </source>
</evidence>
<feature type="chain" id="PRO_1000116854" description="SsrA-binding protein">
    <location>
        <begin position="1"/>
        <end position="158"/>
    </location>
</feature>
<comment type="function">
    <text evidence="1">Required for rescue of stalled ribosomes mediated by trans-translation. Binds to transfer-messenger RNA (tmRNA), required for stable association of tmRNA with ribosomes. tmRNA and SmpB together mimic tRNA shape, replacing the anticodon stem-loop with SmpB. tmRNA is encoded by the ssrA gene; the 2 termini fold to resemble tRNA(Ala) and it encodes a 'tag peptide', a short internal open reading frame. During trans-translation Ala-aminoacylated tmRNA acts like a tRNA, entering the A-site of stalled ribosomes, displacing the stalled mRNA. The ribosome then switches to translate the ORF on the tmRNA; the nascent peptide is terminated with the 'tag peptide' encoded by the tmRNA and targeted for degradation. The ribosome is freed to recommence translation, which seems to be the essential function of trans-translation.</text>
</comment>
<comment type="subcellular location">
    <subcellularLocation>
        <location evidence="1">Cytoplasm</location>
    </subcellularLocation>
    <text evidence="1">The tmRNA-SmpB complex associates with stalled 70S ribosomes.</text>
</comment>
<comment type="similarity">
    <text evidence="1">Belongs to the SmpB family.</text>
</comment>
<name>SSRP_CHLAD</name>
<protein>
    <recommendedName>
        <fullName evidence="1">SsrA-binding protein</fullName>
    </recommendedName>
    <alternativeName>
        <fullName evidence="1">Small protein B</fullName>
    </alternativeName>
</protein>